<keyword id="KW-0067">ATP-binding</keyword>
<keyword id="KW-0963">Cytoplasm</keyword>
<keyword id="KW-0227">DNA damage</keyword>
<keyword id="KW-0234">DNA repair</keyword>
<keyword id="KW-0235">DNA replication</keyword>
<keyword id="KW-0238">DNA-binding</keyword>
<keyword id="KW-0547">Nucleotide-binding</keyword>
<keyword id="KW-0742">SOS response</keyword>
<evidence type="ECO:0000255" key="1">
    <source>
        <dbReference type="HAMAP-Rule" id="MF_00365"/>
    </source>
</evidence>
<proteinExistence type="inferred from homology"/>
<dbReference type="EMBL" id="FM211192">
    <property type="protein sequence ID" value="CAR70096.1"/>
    <property type="molecule type" value="Genomic_DNA"/>
</dbReference>
<dbReference type="SMR" id="B8ZTP0"/>
<dbReference type="KEGG" id="mlb:MLBr00003"/>
<dbReference type="HOGENOM" id="CLU_040267_1_1_11"/>
<dbReference type="Proteomes" id="UP000006900">
    <property type="component" value="Chromosome"/>
</dbReference>
<dbReference type="GO" id="GO:0005737">
    <property type="term" value="C:cytoplasm"/>
    <property type="evidence" value="ECO:0007669"/>
    <property type="project" value="UniProtKB-SubCell"/>
</dbReference>
<dbReference type="GO" id="GO:0005524">
    <property type="term" value="F:ATP binding"/>
    <property type="evidence" value="ECO:0007669"/>
    <property type="project" value="UniProtKB-UniRule"/>
</dbReference>
<dbReference type="GO" id="GO:0003697">
    <property type="term" value="F:single-stranded DNA binding"/>
    <property type="evidence" value="ECO:0007669"/>
    <property type="project" value="UniProtKB-UniRule"/>
</dbReference>
<dbReference type="GO" id="GO:0006260">
    <property type="term" value="P:DNA replication"/>
    <property type="evidence" value="ECO:0007669"/>
    <property type="project" value="UniProtKB-UniRule"/>
</dbReference>
<dbReference type="GO" id="GO:0000731">
    <property type="term" value="P:DNA synthesis involved in DNA repair"/>
    <property type="evidence" value="ECO:0007669"/>
    <property type="project" value="TreeGrafter"/>
</dbReference>
<dbReference type="GO" id="GO:0006302">
    <property type="term" value="P:double-strand break repair"/>
    <property type="evidence" value="ECO:0007669"/>
    <property type="project" value="TreeGrafter"/>
</dbReference>
<dbReference type="GO" id="GO:0009432">
    <property type="term" value="P:SOS response"/>
    <property type="evidence" value="ECO:0007669"/>
    <property type="project" value="UniProtKB-UniRule"/>
</dbReference>
<dbReference type="CDD" id="cd03242">
    <property type="entry name" value="ABC_RecF"/>
    <property type="match status" value="1"/>
</dbReference>
<dbReference type="Gene3D" id="3.40.50.300">
    <property type="entry name" value="P-loop containing nucleotide triphosphate hydrolases"/>
    <property type="match status" value="1"/>
</dbReference>
<dbReference type="Gene3D" id="1.20.1050.90">
    <property type="entry name" value="RecF/RecN/SMC, N-terminal domain"/>
    <property type="match status" value="1"/>
</dbReference>
<dbReference type="HAMAP" id="MF_00365">
    <property type="entry name" value="RecF"/>
    <property type="match status" value="1"/>
</dbReference>
<dbReference type="InterPro" id="IPR001238">
    <property type="entry name" value="DNA-binding_RecF"/>
</dbReference>
<dbReference type="InterPro" id="IPR018078">
    <property type="entry name" value="DNA-binding_RecF_CS"/>
</dbReference>
<dbReference type="InterPro" id="IPR027417">
    <property type="entry name" value="P-loop_NTPase"/>
</dbReference>
<dbReference type="InterPro" id="IPR003395">
    <property type="entry name" value="RecF/RecN/SMC_N"/>
</dbReference>
<dbReference type="InterPro" id="IPR042174">
    <property type="entry name" value="RecF_2"/>
</dbReference>
<dbReference type="NCBIfam" id="TIGR00611">
    <property type="entry name" value="recf"/>
    <property type="match status" value="1"/>
</dbReference>
<dbReference type="PANTHER" id="PTHR32182">
    <property type="entry name" value="DNA REPLICATION AND REPAIR PROTEIN RECF"/>
    <property type="match status" value="1"/>
</dbReference>
<dbReference type="PANTHER" id="PTHR32182:SF0">
    <property type="entry name" value="DNA REPLICATION AND REPAIR PROTEIN RECF"/>
    <property type="match status" value="1"/>
</dbReference>
<dbReference type="Pfam" id="PF02463">
    <property type="entry name" value="SMC_N"/>
    <property type="match status" value="1"/>
</dbReference>
<dbReference type="SUPFAM" id="SSF52540">
    <property type="entry name" value="P-loop containing nucleoside triphosphate hydrolases"/>
    <property type="match status" value="1"/>
</dbReference>
<dbReference type="PROSITE" id="PS00617">
    <property type="entry name" value="RECF_1"/>
    <property type="match status" value="1"/>
</dbReference>
<dbReference type="PROSITE" id="PS00618">
    <property type="entry name" value="RECF_2"/>
    <property type="match status" value="1"/>
</dbReference>
<comment type="function">
    <text evidence="1">The RecF protein is involved in DNA metabolism; it is required for DNA replication and normal SOS inducibility. RecF binds preferentially to single-stranded, linear DNA. It also seems to bind ATP.</text>
</comment>
<comment type="subcellular location">
    <subcellularLocation>
        <location evidence="1">Cytoplasm</location>
    </subcellularLocation>
</comment>
<comment type="similarity">
    <text evidence="1">Belongs to the RecF family.</text>
</comment>
<sequence length="385" mass="42067">MYVRHFGLRDFRSWDHVDLELNPGRTVFFGPNGNGKTNLIEALWYSTTLSSHRVGTDIPLIRAGTIRAIVSTIVVNEGRECAIDLEIAAGRANRARLNRSLVRGMREVVGVLRAVLFAPEDLALVCGDPANRRRYLDDLATVRQPVIAAVRADYDKVLRQRTALLKSLAAARYRSDQGVLDTLDVWDTRLAEHGAELMAARIDLVNQLAPEVEKAYQLLAPGSRTASISYRASLDIGGIAGVGSSDRALLQADLLAGLSTRRNVELERGICLVGPHRDELELRLGDQPAKGFASHGESWSLAIALRLAAYELLRADGNEPVLLLDDVFAELDAARCRALATVAESAEQVLVTSAAQEDIPVGWDAKWVTVDLRDSDSGRVSVVYP</sequence>
<organism>
    <name type="scientific">Mycobacterium leprae (strain Br4923)</name>
    <dbReference type="NCBI Taxonomy" id="561304"/>
    <lineage>
        <taxon>Bacteria</taxon>
        <taxon>Bacillati</taxon>
        <taxon>Actinomycetota</taxon>
        <taxon>Actinomycetes</taxon>
        <taxon>Mycobacteriales</taxon>
        <taxon>Mycobacteriaceae</taxon>
        <taxon>Mycobacterium</taxon>
    </lineage>
</organism>
<reference key="1">
    <citation type="journal article" date="2009" name="Nat. Genet.">
        <title>Comparative genomic and phylogeographic analysis of Mycobacterium leprae.</title>
        <authorList>
            <person name="Monot M."/>
            <person name="Honore N."/>
            <person name="Garnier T."/>
            <person name="Zidane N."/>
            <person name="Sherafi D."/>
            <person name="Paniz-Mondolfi A."/>
            <person name="Matsuoka M."/>
            <person name="Taylor G.M."/>
            <person name="Donoghue H.D."/>
            <person name="Bouwman A."/>
            <person name="Mays S."/>
            <person name="Watson C."/>
            <person name="Lockwood D."/>
            <person name="Khamispour A."/>
            <person name="Dowlati Y."/>
            <person name="Jianping S."/>
            <person name="Rea T.H."/>
            <person name="Vera-Cabrera L."/>
            <person name="Stefani M.M."/>
            <person name="Banu S."/>
            <person name="Macdonald M."/>
            <person name="Sapkota B.R."/>
            <person name="Spencer J.S."/>
            <person name="Thomas J."/>
            <person name="Harshman K."/>
            <person name="Singh P."/>
            <person name="Busso P."/>
            <person name="Gattiker A."/>
            <person name="Rougemont J."/>
            <person name="Brennan P.J."/>
            <person name="Cole S.T."/>
        </authorList>
    </citation>
    <scope>NUCLEOTIDE SEQUENCE [LARGE SCALE GENOMIC DNA]</scope>
    <source>
        <strain>Br4923</strain>
    </source>
</reference>
<name>RECF_MYCLB</name>
<feature type="chain" id="PRO_1000133695" description="DNA replication and repair protein RecF">
    <location>
        <begin position="1"/>
        <end position="385"/>
    </location>
</feature>
<feature type="binding site" evidence="1">
    <location>
        <begin position="30"/>
        <end position="37"/>
    </location>
    <ligand>
        <name>ATP</name>
        <dbReference type="ChEBI" id="CHEBI:30616"/>
    </ligand>
</feature>
<accession>B8ZTP0</accession>
<gene>
    <name evidence="1" type="primary">recF</name>
    <name type="ordered locus">MLBr00003</name>
</gene>
<protein>
    <recommendedName>
        <fullName evidence="1">DNA replication and repair protein RecF</fullName>
    </recommendedName>
</protein>